<sequence length="823" mass="94048">MKLFGFGSRRGQTAQGSIDHVYTGSGYRIRDSELQKIHRAAVKGDAAEVERCLARRSGDLDALDKQHRTALHLACTSGHVQVVTLLVNRKCQIDVCDKENRTPLIQAVHCQEEACAVILLEHGANPNLKDIYGNTALHYAVYSESTSLAEKLLSHGAHIEALDKDNNTPLLFAIICKKEKMVEFLLKKKASSHAVDRLRRSALMLAVYYDSPGIVNILLKQNIDVFAQDMCGRDAEDYAISHHLTKIQQQILEHKKKILKKEKSDVGSSDESAVSIFHELRVDSLPASDDKDLNVATKQCVPEKVSEPLPGSSHEKGNRIVNGQGEGPPAKHPSLKPSTEVEDPAVKGAVQRKNVQTLRAEQALPVASEEEQERHERSEKKQPQVKEGNNTNKSEKIQLSENICDSTSSAAAGRLTQQRKIGKTYPQQFPKKLKEEHDRCTLKQENEEKTNVNMLYKKNREELERKEKQYKKEVEAKQLEPTVQSLEMKSKTARNTPNWDFHNHEEMKGLMDENCILKADIAILRQEICTMKNDNLEKENKYLKDIKIVKETNAALEKYIKLNEEMITETAFRYQQELNDLKAENTRLNAELLKEKESKKRLEADIESYQSRLAAAISKHSESVKTERNLKLALERTRDVSVQVEMSSAISKVKAENEFLTEQLSETQIKFNALKDKFRKTRDSLRKKSLALETVQNDLSQTQQQTQEMKEMYQNAEAKVNNSTGKWNCVEERICHLQRENAWLVQQLDDVHQKEDHKEIVTNIQRGFIESGKKDLVLEEKSKKLMNECDHLKESLFQYEREKTEGVVSIKEDKYFQTSRKTI</sequence>
<protein>
    <recommendedName>
        <fullName>Ankyrin repeat domain-containing protein 20A1</fullName>
    </recommendedName>
</protein>
<accession>Q5TYW2</accession>
<accession>Q9H0H6</accession>
<evidence type="ECO:0000255" key="1"/>
<evidence type="ECO:0000256" key="2">
    <source>
        <dbReference type="SAM" id="MobiDB-lite"/>
    </source>
</evidence>
<evidence type="ECO:0000305" key="3"/>
<feature type="chain" id="PRO_0000240834" description="Ankyrin repeat domain-containing protein 20A1">
    <location>
        <begin position="1"/>
        <end position="823"/>
    </location>
</feature>
<feature type="repeat" description="ANK 1">
    <location>
        <begin position="66"/>
        <end position="95"/>
    </location>
</feature>
<feature type="repeat" description="ANK 2">
    <location>
        <begin position="99"/>
        <end position="128"/>
    </location>
</feature>
<feature type="repeat" description="ANK 3">
    <location>
        <begin position="132"/>
        <end position="161"/>
    </location>
</feature>
<feature type="repeat" description="ANK 4">
    <location>
        <begin position="165"/>
        <end position="194"/>
    </location>
</feature>
<feature type="repeat" description="ANK 5">
    <location>
        <begin position="198"/>
        <end position="227"/>
    </location>
</feature>
<feature type="region of interest" description="Disordered" evidence="2">
    <location>
        <begin position="301"/>
        <end position="343"/>
    </location>
</feature>
<feature type="region of interest" description="Disordered" evidence="2">
    <location>
        <begin position="355"/>
        <end position="402"/>
    </location>
</feature>
<feature type="coiled-coil region" evidence="1">
    <location>
        <begin position="431"/>
        <end position="480"/>
    </location>
</feature>
<feature type="coiled-coil region" evidence="1">
    <location>
        <begin position="565"/>
        <end position="724"/>
    </location>
</feature>
<feature type="coiled-coil region" evidence="1">
    <location>
        <begin position="776"/>
        <end position="805"/>
    </location>
</feature>
<feature type="compositionally biased region" description="Basic and acidic residues" evidence="2">
    <location>
        <begin position="372"/>
        <end position="384"/>
    </location>
</feature>
<feature type="sequence conflict" description="In Ref. 1; CAB66727." evidence="3" ref="1">
    <original>T</original>
    <variation>A</variation>
    <location>
        <position position="76"/>
    </location>
</feature>
<feature type="sequence conflict" description="In Ref. 1; CAB66727." evidence="3" ref="1">
    <original>L</original>
    <variation>F</variation>
    <location>
        <position position="128"/>
    </location>
</feature>
<feature type="sequence conflict" description="In Ref. 1; CAB66727." evidence="3" ref="1">
    <original>W</original>
    <variation>R</variation>
    <location>
        <position position="499"/>
    </location>
</feature>
<feature type="sequence conflict" description="In Ref. 1; CAB66727." evidence="3" ref="1">
    <original>R</original>
    <variation>C</variation>
    <location>
        <position position="679"/>
    </location>
</feature>
<feature type="sequence conflict" description="In Ref. 1; CAB66727." evidence="3" ref="1">
    <original>G</original>
    <variation>E</variation>
    <location>
        <position position="772"/>
    </location>
</feature>
<feature type="sequence conflict" description="In Ref. 1; CAB66727." evidence="3" ref="1">
    <original>E</original>
    <variation>G</variation>
    <location>
        <position position="805"/>
    </location>
</feature>
<keyword id="KW-0040">ANK repeat</keyword>
<keyword id="KW-0175">Coiled coil</keyword>
<keyword id="KW-1185">Reference proteome</keyword>
<keyword id="KW-0677">Repeat</keyword>
<organism>
    <name type="scientific">Homo sapiens</name>
    <name type="common">Human</name>
    <dbReference type="NCBI Taxonomy" id="9606"/>
    <lineage>
        <taxon>Eukaryota</taxon>
        <taxon>Metazoa</taxon>
        <taxon>Chordata</taxon>
        <taxon>Craniata</taxon>
        <taxon>Vertebrata</taxon>
        <taxon>Euteleostomi</taxon>
        <taxon>Mammalia</taxon>
        <taxon>Eutheria</taxon>
        <taxon>Euarchontoglires</taxon>
        <taxon>Primates</taxon>
        <taxon>Haplorrhini</taxon>
        <taxon>Catarrhini</taxon>
        <taxon>Hominidae</taxon>
        <taxon>Homo</taxon>
    </lineage>
</organism>
<proteinExistence type="evidence at transcript level"/>
<dbReference type="EMBL" id="AL136793">
    <property type="protein sequence ID" value="CAB66727.1"/>
    <property type="molecule type" value="mRNA"/>
</dbReference>
<dbReference type="EMBL" id="BX649567">
    <property type="status" value="NOT_ANNOTATED_CDS"/>
    <property type="molecule type" value="Genomic_DNA"/>
</dbReference>
<dbReference type="CCDS" id="CCDS6620.1"/>
<dbReference type="RefSeq" id="NP_115626.2">
    <property type="nucleotide sequence ID" value="NM_032250.5"/>
</dbReference>
<dbReference type="SMR" id="Q5TYW2"/>
<dbReference type="BioGRID" id="123947">
    <property type="interactions" value="13"/>
</dbReference>
<dbReference type="FunCoup" id="Q5TYW2">
    <property type="interactions" value="7"/>
</dbReference>
<dbReference type="IntAct" id="Q5TYW2">
    <property type="interactions" value="10"/>
</dbReference>
<dbReference type="MINT" id="Q5TYW2"/>
<dbReference type="STRING" id="9606.ENSP00000477695"/>
<dbReference type="GlyGen" id="Q5TYW2">
    <property type="glycosylation" value="1 site, 1 O-linked glycan (1 site)"/>
</dbReference>
<dbReference type="iPTMnet" id="Q5TYW2"/>
<dbReference type="PhosphoSitePlus" id="Q5TYW2"/>
<dbReference type="BioMuta" id="ANKRD20A1"/>
<dbReference type="DMDM" id="74746676"/>
<dbReference type="jPOST" id="Q5TYW2"/>
<dbReference type="MassIVE" id="Q5TYW2"/>
<dbReference type="PaxDb" id="9606-ENSP00000477695"/>
<dbReference type="PeptideAtlas" id="Q5TYW2"/>
<dbReference type="Antibodypedia" id="73397">
    <property type="antibodies" value="70 antibodies from 19 providers"/>
</dbReference>
<dbReference type="DNASU" id="84210"/>
<dbReference type="Ensembl" id="ENST00000562196.6">
    <property type="protein sequence ID" value="ENSP00000477695.1"/>
    <property type="gene ID" value="ENSG00000260691.8"/>
</dbReference>
<dbReference type="GeneID" id="84210"/>
<dbReference type="KEGG" id="hsa:84210"/>
<dbReference type="MANE-Select" id="ENST00000562196.6">
    <property type="protein sequence ID" value="ENSP00000477695.1"/>
    <property type="RefSeq nucleotide sequence ID" value="NM_032250.5"/>
    <property type="RefSeq protein sequence ID" value="NP_115626.2"/>
</dbReference>
<dbReference type="UCSC" id="uc004aeu.4">
    <property type="organism name" value="human"/>
</dbReference>
<dbReference type="AGR" id="HGNC:23665"/>
<dbReference type="CTD" id="84210"/>
<dbReference type="GeneCards" id="ANKRD20A1"/>
<dbReference type="HGNC" id="HGNC:23665">
    <property type="gene designation" value="ANKRD20A1"/>
</dbReference>
<dbReference type="HPA" id="ENSG00000260691">
    <property type="expression patterns" value="Tissue enhanced (testis)"/>
</dbReference>
<dbReference type="neXtProt" id="NX_Q5TYW2"/>
<dbReference type="PharmGKB" id="PA134953648"/>
<dbReference type="VEuPathDB" id="HostDB:ENSG00000260691"/>
<dbReference type="eggNOG" id="KOG0504">
    <property type="taxonomic scope" value="Eukaryota"/>
</dbReference>
<dbReference type="GeneTree" id="ENSGT00940000163801"/>
<dbReference type="HOGENOM" id="CLU_001111_3_0_1"/>
<dbReference type="InParanoid" id="Q5TYW2"/>
<dbReference type="OrthoDB" id="15045at9604"/>
<dbReference type="PAN-GO" id="Q5TYW2">
    <property type="GO annotations" value="0 GO annotations based on evolutionary models"/>
</dbReference>
<dbReference type="PhylomeDB" id="Q5TYW2"/>
<dbReference type="TreeFam" id="TF333496"/>
<dbReference type="PathwayCommons" id="Q5TYW2"/>
<dbReference type="SignaLink" id="Q5TYW2"/>
<dbReference type="BioGRID-ORCS" id="84210">
    <property type="hits" value="52 hits in 329 CRISPR screens"/>
</dbReference>
<dbReference type="ChiTaRS" id="ANKRD20A1">
    <property type="organism name" value="human"/>
</dbReference>
<dbReference type="GenomeRNAi" id="84210"/>
<dbReference type="Pharos" id="Q5TYW2">
    <property type="development level" value="Tdark"/>
</dbReference>
<dbReference type="PRO" id="PR:Q5TYW2"/>
<dbReference type="Proteomes" id="UP000005640">
    <property type="component" value="Chromosome 9"/>
</dbReference>
<dbReference type="RNAct" id="Q5TYW2">
    <property type="molecule type" value="protein"/>
</dbReference>
<dbReference type="Bgee" id="ENSG00000260691">
    <property type="expression patterns" value="Expressed in male germ line stem cell (sensu Vertebrata) in testis and 101 other cell types or tissues"/>
</dbReference>
<dbReference type="ExpressionAtlas" id="Q5TYW2">
    <property type="expression patterns" value="baseline and differential"/>
</dbReference>
<dbReference type="GO" id="GO:0005886">
    <property type="term" value="C:plasma membrane"/>
    <property type="evidence" value="ECO:0000314"/>
    <property type="project" value="LIFEdb"/>
</dbReference>
<dbReference type="FunFam" id="1.25.40.20:FF:000518">
    <property type="entry name" value="Ankyrin repeat domain-containing protein 20A1"/>
    <property type="match status" value="1"/>
</dbReference>
<dbReference type="FunFam" id="1.25.40.20:FF:000208">
    <property type="entry name" value="Ankyrin repeat domain-containing protein 26"/>
    <property type="match status" value="1"/>
</dbReference>
<dbReference type="Gene3D" id="1.25.40.20">
    <property type="entry name" value="Ankyrin repeat-containing domain"/>
    <property type="match status" value="2"/>
</dbReference>
<dbReference type="InterPro" id="IPR050657">
    <property type="entry name" value="Ankyrin_repeat_domain"/>
</dbReference>
<dbReference type="InterPro" id="IPR002110">
    <property type="entry name" value="Ankyrin_rpt"/>
</dbReference>
<dbReference type="InterPro" id="IPR036770">
    <property type="entry name" value="Ankyrin_rpt-contain_sf"/>
</dbReference>
<dbReference type="InterPro" id="IPR039497">
    <property type="entry name" value="CC144C-like_CC_dom"/>
</dbReference>
<dbReference type="PANTHER" id="PTHR24147">
    <property type="entry name" value="ANKYRIN REPEAT DOMAIN 36-RELATED"/>
    <property type="match status" value="1"/>
</dbReference>
<dbReference type="PANTHER" id="PTHR24147:SF1">
    <property type="entry name" value="ANKYRIN REPEAT DOMAIN-CONTAINING PROTEIN 20A1-RELATED"/>
    <property type="match status" value="1"/>
</dbReference>
<dbReference type="Pfam" id="PF00023">
    <property type="entry name" value="Ank"/>
    <property type="match status" value="3"/>
</dbReference>
<dbReference type="Pfam" id="PF12796">
    <property type="entry name" value="Ank_2"/>
    <property type="match status" value="1"/>
</dbReference>
<dbReference type="Pfam" id="PF14915">
    <property type="entry name" value="CCDC144C"/>
    <property type="match status" value="2"/>
</dbReference>
<dbReference type="PRINTS" id="PR01415">
    <property type="entry name" value="ANKYRIN"/>
</dbReference>
<dbReference type="SMART" id="SM00248">
    <property type="entry name" value="ANK"/>
    <property type="match status" value="6"/>
</dbReference>
<dbReference type="SUPFAM" id="SSF48403">
    <property type="entry name" value="Ankyrin repeat"/>
    <property type="match status" value="1"/>
</dbReference>
<dbReference type="PROSITE" id="PS50297">
    <property type="entry name" value="ANK_REP_REGION"/>
    <property type="match status" value="1"/>
</dbReference>
<dbReference type="PROSITE" id="PS50088">
    <property type="entry name" value="ANK_REPEAT"/>
    <property type="match status" value="4"/>
</dbReference>
<reference key="1">
    <citation type="journal article" date="2001" name="Genome Res.">
        <title>Towards a catalog of human genes and proteins: sequencing and analysis of 500 novel complete protein coding human cDNAs.</title>
        <authorList>
            <person name="Wiemann S."/>
            <person name="Weil B."/>
            <person name="Wellenreuther R."/>
            <person name="Gassenhuber J."/>
            <person name="Glassl S."/>
            <person name="Ansorge W."/>
            <person name="Boecher M."/>
            <person name="Bloecker H."/>
            <person name="Bauersachs S."/>
            <person name="Blum H."/>
            <person name="Lauber J."/>
            <person name="Duesterhoeft A."/>
            <person name="Beyer A."/>
            <person name="Koehrer K."/>
            <person name="Strack N."/>
            <person name="Mewes H.-W."/>
            <person name="Ottenwaelder B."/>
            <person name="Obermaier B."/>
            <person name="Tampe J."/>
            <person name="Heubner D."/>
            <person name="Wambutt R."/>
            <person name="Korn B."/>
            <person name="Klein M."/>
            <person name="Poustka A."/>
        </authorList>
    </citation>
    <scope>NUCLEOTIDE SEQUENCE [LARGE SCALE MRNA]</scope>
    <source>
        <tissue>Testis</tissue>
    </source>
</reference>
<reference key="2">
    <citation type="journal article" date="2004" name="Nature">
        <title>DNA sequence and analysis of human chromosome 9.</title>
        <authorList>
            <person name="Humphray S.J."/>
            <person name="Oliver K."/>
            <person name="Hunt A.R."/>
            <person name="Plumb R.W."/>
            <person name="Loveland J.E."/>
            <person name="Howe K.L."/>
            <person name="Andrews T.D."/>
            <person name="Searle S."/>
            <person name="Hunt S.E."/>
            <person name="Scott C.E."/>
            <person name="Jones M.C."/>
            <person name="Ainscough R."/>
            <person name="Almeida J.P."/>
            <person name="Ambrose K.D."/>
            <person name="Ashwell R.I.S."/>
            <person name="Babbage A.K."/>
            <person name="Babbage S."/>
            <person name="Bagguley C.L."/>
            <person name="Bailey J."/>
            <person name="Banerjee R."/>
            <person name="Barker D.J."/>
            <person name="Barlow K.F."/>
            <person name="Bates K."/>
            <person name="Beasley H."/>
            <person name="Beasley O."/>
            <person name="Bird C.P."/>
            <person name="Bray-Allen S."/>
            <person name="Brown A.J."/>
            <person name="Brown J.Y."/>
            <person name="Burford D."/>
            <person name="Burrill W."/>
            <person name="Burton J."/>
            <person name="Carder C."/>
            <person name="Carter N.P."/>
            <person name="Chapman J.C."/>
            <person name="Chen Y."/>
            <person name="Clarke G."/>
            <person name="Clark S.Y."/>
            <person name="Clee C.M."/>
            <person name="Clegg S."/>
            <person name="Collier R.E."/>
            <person name="Corby N."/>
            <person name="Crosier M."/>
            <person name="Cummings A.T."/>
            <person name="Davies J."/>
            <person name="Dhami P."/>
            <person name="Dunn M."/>
            <person name="Dutta I."/>
            <person name="Dyer L.W."/>
            <person name="Earthrowl M.E."/>
            <person name="Faulkner L."/>
            <person name="Fleming C.J."/>
            <person name="Frankish A."/>
            <person name="Frankland J.A."/>
            <person name="French L."/>
            <person name="Fricker D.G."/>
            <person name="Garner P."/>
            <person name="Garnett J."/>
            <person name="Ghori J."/>
            <person name="Gilbert J.G.R."/>
            <person name="Glison C."/>
            <person name="Grafham D.V."/>
            <person name="Gribble S."/>
            <person name="Griffiths C."/>
            <person name="Griffiths-Jones S."/>
            <person name="Grocock R."/>
            <person name="Guy J."/>
            <person name="Hall R.E."/>
            <person name="Hammond S."/>
            <person name="Harley J.L."/>
            <person name="Harrison E.S.I."/>
            <person name="Hart E.A."/>
            <person name="Heath P.D."/>
            <person name="Henderson C.D."/>
            <person name="Hopkins B.L."/>
            <person name="Howard P.J."/>
            <person name="Howden P.J."/>
            <person name="Huckle E."/>
            <person name="Johnson C."/>
            <person name="Johnson D."/>
            <person name="Joy A.A."/>
            <person name="Kay M."/>
            <person name="Keenan S."/>
            <person name="Kershaw J.K."/>
            <person name="Kimberley A.M."/>
            <person name="King A."/>
            <person name="Knights A."/>
            <person name="Laird G.K."/>
            <person name="Langford C."/>
            <person name="Lawlor S."/>
            <person name="Leongamornlert D.A."/>
            <person name="Leversha M."/>
            <person name="Lloyd C."/>
            <person name="Lloyd D.M."/>
            <person name="Lovell J."/>
            <person name="Martin S."/>
            <person name="Mashreghi-Mohammadi M."/>
            <person name="Matthews L."/>
            <person name="McLaren S."/>
            <person name="McLay K.E."/>
            <person name="McMurray A."/>
            <person name="Milne S."/>
            <person name="Nickerson T."/>
            <person name="Nisbett J."/>
            <person name="Nordsiek G."/>
            <person name="Pearce A.V."/>
            <person name="Peck A.I."/>
            <person name="Porter K.M."/>
            <person name="Pandian R."/>
            <person name="Pelan S."/>
            <person name="Phillimore B."/>
            <person name="Povey S."/>
            <person name="Ramsey Y."/>
            <person name="Rand V."/>
            <person name="Scharfe M."/>
            <person name="Sehra H.K."/>
            <person name="Shownkeen R."/>
            <person name="Sims S.K."/>
            <person name="Skuce C.D."/>
            <person name="Smith M."/>
            <person name="Steward C.A."/>
            <person name="Swarbreck D."/>
            <person name="Sycamore N."/>
            <person name="Tester J."/>
            <person name="Thorpe A."/>
            <person name="Tracey A."/>
            <person name="Tromans A."/>
            <person name="Thomas D.W."/>
            <person name="Wall M."/>
            <person name="Wallis J.M."/>
            <person name="West A.P."/>
            <person name="Whitehead S.L."/>
            <person name="Willey D.L."/>
            <person name="Williams S.A."/>
            <person name="Wilming L."/>
            <person name="Wray P.W."/>
            <person name="Young L."/>
            <person name="Ashurst J.L."/>
            <person name="Coulson A."/>
            <person name="Blocker H."/>
            <person name="Durbin R.M."/>
            <person name="Sulston J.E."/>
            <person name="Hubbard T."/>
            <person name="Jackson M.J."/>
            <person name="Bentley D.R."/>
            <person name="Beck S."/>
            <person name="Rogers J."/>
            <person name="Dunham I."/>
        </authorList>
    </citation>
    <scope>NUCLEOTIDE SEQUENCE [LARGE SCALE GENOMIC DNA]</scope>
</reference>
<name>A20A1_HUMAN</name>
<gene>
    <name type="primary">ANKRD20A1</name>
    <name type="synonym">ANKRD20A</name>
</gene>